<sequence>MVSSQKLEKPIEMGSSEPLPIVDSDKRRKKKRKTRATDSLPGKFEDVYQLTSELLGEGAYAKVQGAVNLQSGKEYAVKIIEKQAGHSRSRVFREVETLYQCQGNRNILELIEFFEDDTRFYLVFEKLQGGSILAHIQKRKHFNEREASRVVRDVATALDFLHTKGIAHRDLKPENILCESPEKVSPVKICDFDLGSGVKLNNSCTPITTPELTTPCGSAEYMAPEVVEVFRDEATFYDKRCDLWSLGVVLYIMLSGYPPFVGHCGADCGWDRGEVCRMCQNKLFESIQEGKYEFPDKDWAHISNEAKDLISKLLVRDAKQRLSAAQVLQHPWVQGQAPERGLPTPQVLQRNSSTMDLTLFAAEAIALNRQLSQHEENELAEEQEALAEGLCSMKLSPPSKSRLARRRALAQAGRSRDANPCLTPAGL</sequence>
<accession>O08605</accession>
<protein>
    <recommendedName>
        <fullName>MAP kinase-interacting serine/threonine-protein kinase 1</fullName>
        <ecNumber evidence="7">2.7.11.1</ecNumber>
    </recommendedName>
    <alternativeName>
        <fullName>MAP kinase signal-integrating kinase 1</fullName>
        <shortName>MAPK signal-integrating kinase 1</shortName>
        <shortName>Mnk1</shortName>
    </alternativeName>
</protein>
<reference evidence="8" key="1">
    <citation type="journal article" date="2004" name="Genome Res.">
        <title>The status, quality, and expansion of the NIH full-length cDNA project: the Mammalian Gene Collection (MGC).</title>
        <authorList>
            <consortium name="The MGC Project Team"/>
        </authorList>
    </citation>
    <scope>NUCLEOTIDE SEQUENCE [LARGE SCALE MRNA]</scope>
    <source>
        <tissue>Mammary gland</tissue>
    </source>
</reference>
<reference evidence="8" key="2">
    <citation type="journal article" date="1997" name="EMBO J.">
        <title>Mitogen-activated protein kinases activate the serine/threonine kinases Mnk1 and Mnk2.</title>
        <authorList>
            <person name="Waskiewicz A.J."/>
            <person name="Flynn A."/>
            <person name="Proud C.G."/>
            <person name="Cooper J.A."/>
        </authorList>
    </citation>
    <scope>NUCLEOTIDE SEQUENCE [MRNA] OF 13-427</scope>
    <scope>FUNCTION</scope>
    <scope>CATALYTIC ACTIVITY</scope>
    <scope>COFACTOR</scope>
    <scope>INTERACTION WITH MAPK3; MAPK1 AND P38 KINASE</scope>
    <scope>PHOSPHORYLATION AT THR-209 AND THR-214</scope>
    <scope>MUTAGENESIS OF THR-209 AND THR-214</scope>
    <source>
        <tissue>Embryo</tissue>
    </source>
</reference>
<reference key="3">
    <citation type="journal article" date="2004" name="J. Biol. Chem.">
        <title>Phosphorylation of Mnk1 by caspase-activated Pak2/gamma-PAK inhibits phosphorylation and interaction of eIF4G with Mnk.</title>
        <authorList>
            <person name="Orton K.C."/>
            <person name="Ling J."/>
            <person name="Waskiewicz A.J."/>
            <person name="Cooper J.A."/>
            <person name="Merrick W.C."/>
            <person name="Korneeva N.L."/>
            <person name="Rhoads R.E."/>
            <person name="Sonenberg N."/>
            <person name="Traugh J.A."/>
        </authorList>
    </citation>
    <scope>PHOSPHORYLATION AT THR-34 AND SER-39 BY PAK2</scope>
</reference>
<reference key="4">
    <citation type="journal article" date="2010" name="Cell">
        <title>A tissue-specific atlas of mouse protein phosphorylation and expression.</title>
        <authorList>
            <person name="Huttlin E.L."/>
            <person name="Jedrychowski M.P."/>
            <person name="Elias J.E."/>
            <person name="Goswami T."/>
            <person name="Rad R."/>
            <person name="Beausoleil S.A."/>
            <person name="Villen J."/>
            <person name="Haas W."/>
            <person name="Sowa M.E."/>
            <person name="Gygi S.P."/>
        </authorList>
    </citation>
    <scope>PHOSPHORYLATION [LARGE SCALE ANALYSIS] AT SER-180 AND SER-185</scope>
    <scope>IDENTIFICATION BY MASS SPECTROMETRY [LARGE SCALE ANALYSIS]</scope>
    <source>
        <tissue>Brain</tissue>
        <tissue>Pancreas</tissue>
        <tissue>Spleen</tissue>
    </source>
</reference>
<comment type="function">
    <text evidence="7">May play a role in the response to environmental stress and cytokines. Appears to regulate translation by phosphorylating EIF4E, thus increasing the affinity of this protein for the 7-methylguanosine-containing mRNA cap.</text>
</comment>
<comment type="catalytic activity">
    <reaction evidence="7">
        <text>L-seryl-[protein] + ATP = O-phospho-L-seryl-[protein] + ADP + H(+)</text>
        <dbReference type="Rhea" id="RHEA:17989"/>
        <dbReference type="Rhea" id="RHEA-COMP:9863"/>
        <dbReference type="Rhea" id="RHEA-COMP:11604"/>
        <dbReference type="ChEBI" id="CHEBI:15378"/>
        <dbReference type="ChEBI" id="CHEBI:29999"/>
        <dbReference type="ChEBI" id="CHEBI:30616"/>
        <dbReference type="ChEBI" id="CHEBI:83421"/>
        <dbReference type="ChEBI" id="CHEBI:456216"/>
        <dbReference type="EC" id="2.7.11.1"/>
    </reaction>
</comment>
<comment type="catalytic activity">
    <reaction evidence="7">
        <text>L-threonyl-[protein] + ATP = O-phospho-L-threonyl-[protein] + ADP + H(+)</text>
        <dbReference type="Rhea" id="RHEA:46608"/>
        <dbReference type="Rhea" id="RHEA-COMP:11060"/>
        <dbReference type="Rhea" id="RHEA-COMP:11605"/>
        <dbReference type="ChEBI" id="CHEBI:15378"/>
        <dbReference type="ChEBI" id="CHEBI:30013"/>
        <dbReference type="ChEBI" id="CHEBI:30616"/>
        <dbReference type="ChEBI" id="CHEBI:61977"/>
        <dbReference type="ChEBI" id="CHEBI:456216"/>
        <dbReference type="EC" id="2.7.11.1"/>
    </reaction>
</comment>
<comment type="cofactor">
    <cofactor evidence="7">
        <name>Mg(2+)</name>
        <dbReference type="ChEBI" id="CHEBI:18420"/>
    </cofactor>
</comment>
<comment type="activity regulation">
    <text evidence="7">Phosphorylated and activated by the p38 kinases and kinases in the Erk pathway.</text>
</comment>
<comment type="subunit">
    <text evidence="7">Interacts with the C-terminal regions of EIF4G1 and EIF4G2. Also binds to dephosphorylated ERK1 and ERK2, and to the p38 kinases.</text>
</comment>
<comment type="tissue specificity">
    <text evidence="7">Ubiquitously expressed in all tissues examined, with high levels in skeletal muscle.</text>
</comment>
<comment type="PTM">
    <text evidence="1">Dual phosphorylation of Thr-209 and Thr-214 activates the kinase. Phosphorylation of Thr-344 activates the kinase. MAPK3/ERK1 is one of the kinases which activate MKNK1/MNK1. Phosphorylation by PAK2 leads to a reduced phosphorylation of EIF4G1 (By similarity).</text>
</comment>
<comment type="similarity">
    <text evidence="8">Belongs to the protein kinase superfamily. CAMK Ser/Thr protein kinase family.</text>
</comment>
<comment type="sequence caution" evidence="8">
    <conflict type="erroneous initiation">
        <sequence resource="EMBL-CDS" id="AAH21369"/>
    </conflict>
</comment>
<organism evidence="9">
    <name type="scientific">Mus musculus</name>
    <name type="common">Mouse</name>
    <dbReference type="NCBI Taxonomy" id="10090"/>
    <lineage>
        <taxon>Eukaryota</taxon>
        <taxon>Metazoa</taxon>
        <taxon>Chordata</taxon>
        <taxon>Craniata</taxon>
        <taxon>Vertebrata</taxon>
        <taxon>Euteleostomi</taxon>
        <taxon>Mammalia</taxon>
        <taxon>Eutheria</taxon>
        <taxon>Euarchontoglires</taxon>
        <taxon>Glires</taxon>
        <taxon>Rodentia</taxon>
        <taxon>Myomorpha</taxon>
        <taxon>Muroidea</taxon>
        <taxon>Muridae</taxon>
        <taxon>Murinae</taxon>
        <taxon>Mus</taxon>
        <taxon>Mus</taxon>
    </lineage>
</organism>
<evidence type="ECO:0000250" key="1"/>
<evidence type="ECO:0000250" key="2">
    <source>
        <dbReference type="UniProtKB" id="Q9BUB5"/>
    </source>
</evidence>
<evidence type="ECO:0000255" key="3">
    <source>
        <dbReference type="PROSITE-ProRule" id="PRU00159"/>
    </source>
</evidence>
<evidence type="ECO:0000255" key="4">
    <source>
        <dbReference type="PROSITE-ProRule" id="PRU10027"/>
    </source>
</evidence>
<evidence type="ECO:0000256" key="5">
    <source>
        <dbReference type="SAM" id="MobiDB-lite"/>
    </source>
</evidence>
<evidence type="ECO:0000269" key="6">
    <source>
    </source>
</evidence>
<evidence type="ECO:0000269" key="7">
    <source>
    </source>
</evidence>
<evidence type="ECO:0000305" key="8"/>
<evidence type="ECO:0000312" key="9">
    <source>
        <dbReference type="EMBL" id="CAA71965.1"/>
    </source>
</evidence>
<evidence type="ECO:0007744" key="10">
    <source>
    </source>
</evidence>
<gene>
    <name type="primary">Mknk1</name>
    <name type="synonym">Mnk1</name>
</gene>
<proteinExistence type="evidence at protein level"/>
<name>MKNK1_MOUSE</name>
<feature type="chain" id="PRO_0000086335" description="MAP kinase-interacting serine/threonine-protein kinase 1">
    <location>
        <begin position="1"/>
        <end position="427"/>
    </location>
</feature>
<feature type="domain" description="Protein kinase" evidence="3">
    <location>
        <begin position="49"/>
        <end position="333"/>
    </location>
</feature>
<feature type="region of interest" description="Disordered" evidence="5">
    <location>
        <begin position="1"/>
        <end position="37"/>
    </location>
</feature>
<feature type="region of interest" description="Disordered" evidence="5">
    <location>
        <begin position="407"/>
        <end position="427"/>
    </location>
</feature>
<feature type="compositionally biased region" description="Basic and acidic residues" evidence="5">
    <location>
        <begin position="1"/>
        <end position="11"/>
    </location>
</feature>
<feature type="active site" description="Proton acceptor" evidence="3 4">
    <location>
        <position position="170"/>
    </location>
</feature>
<feature type="binding site" evidence="3">
    <location>
        <begin position="55"/>
        <end position="63"/>
    </location>
    <ligand>
        <name>ATP</name>
        <dbReference type="ChEBI" id="CHEBI:30616"/>
    </ligand>
</feature>
<feature type="binding site" evidence="3">
    <location>
        <position position="78"/>
    </location>
    <ligand>
        <name>ATP</name>
        <dbReference type="ChEBI" id="CHEBI:30616"/>
    </ligand>
</feature>
<feature type="modified residue" description="Phosphothreonine; by PAK2" evidence="6">
    <location>
        <position position="34"/>
    </location>
</feature>
<feature type="modified residue" description="Phosphoserine; by PAK2" evidence="6">
    <location>
        <position position="39"/>
    </location>
</feature>
<feature type="modified residue" description="Phosphoserine" evidence="10">
    <location>
        <position position="180"/>
    </location>
</feature>
<feature type="modified residue" description="Phosphoserine" evidence="10">
    <location>
        <position position="185"/>
    </location>
</feature>
<feature type="modified residue" description="Phosphothreonine" evidence="7">
    <location>
        <position position="209"/>
    </location>
</feature>
<feature type="modified residue" description="Phosphothreonine" evidence="7">
    <location>
        <position position="214"/>
    </location>
</feature>
<feature type="modified residue" description="Phosphothreonine" evidence="2">
    <location>
        <position position="344"/>
    </location>
</feature>
<feature type="mutagenesis site" description="Loss of kinase activity; when associated with T-214." evidence="7">
    <original>T</original>
    <variation>A</variation>
    <location>
        <position position="209"/>
    </location>
</feature>
<feature type="mutagenesis site" description="Loss of kinase activity; when associated with T-209." evidence="7">
    <original>T</original>
    <variation>A</variation>
    <location>
        <position position="214"/>
    </location>
</feature>
<keyword id="KW-0067">ATP-binding</keyword>
<keyword id="KW-0418">Kinase</keyword>
<keyword id="KW-0460">Magnesium</keyword>
<keyword id="KW-0479">Metal-binding</keyword>
<keyword id="KW-0547">Nucleotide-binding</keyword>
<keyword id="KW-0597">Phosphoprotein</keyword>
<keyword id="KW-1185">Reference proteome</keyword>
<keyword id="KW-0723">Serine/threonine-protein kinase</keyword>
<keyword id="KW-0808">Transferase</keyword>
<keyword id="KW-0810">Translation regulation</keyword>
<dbReference type="EC" id="2.7.11.1" evidence="7"/>
<dbReference type="EMBL" id="BC021369">
    <property type="protein sequence ID" value="AAH21369.1"/>
    <property type="status" value="ALT_INIT"/>
    <property type="molecule type" value="mRNA"/>
</dbReference>
<dbReference type="EMBL" id="Y11091">
    <property type="protein sequence ID" value="CAA71965.1"/>
    <property type="molecule type" value="mRNA"/>
</dbReference>
<dbReference type="RefSeq" id="NP_001272417.1">
    <property type="nucleotide sequence ID" value="NM_001285488.1"/>
</dbReference>
<dbReference type="RefSeq" id="NP_067436.1">
    <property type="nucleotide sequence ID" value="NM_021461.5"/>
</dbReference>
<dbReference type="SMR" id="O08605"/>
<dbReference type="FunCoup" id="O08605">
    <property type="interactions" value="3052"/>
</dbReference>
<dbReference type="IntAct" id="O08605">
    <property type="interactions" value="1"/>
</dbReference>
<dbReference type="MINT" id="O08605"/>
<dbReference type="STRING" id="10090.ENSMUSP00000102123"/>
<dbReference type="ChEMBL" id="CHEMBL4523120"/>
<dbReference type="iPTMnet" id="O08605"/>
<dbReference type="PhosphoSitePlus" id="O08605"/>
<dbReference type="PaxDb" id="10090-ENSMUSP00000019677"/>
<dbReference type="ProteomicsDB" id="290256"/>
<dbReference type="Pumba" id="O08605"/>
<dbReference type="DNASU" id="17346"/>
<dbReference type="GeneID" id="17346"/>
<dbReference type="KEGG" id="mmu:17346"/>
<dbReference type="UCSC" id="uc008ufl.2">
    <property type="organism name" value="mouse"/>
</dbReference>
<dbReference type="AGR" id="MGI:894316"/>
<dbReference type="CTD" id="8569"/>
<dbReference type="MGI" id="MGI:894316">
    <property type="gene designation" value="Mknk1"/>
</dbReference>
<dbReference type="eggNOG" id="KOG0607">
    <property type="taxonomic scope" value="Eukaryota"/>
</dbReference>
<dbReference type="InParanoid" id="O08605"/>
<dbReference type="OrthoDB" id="5794026at2759"/>
<dbReference type="PhylomeDB" id="O08605"/>
<dbReference type="Reactome" id="R-MMU-1295596">
    <property type="pathway name" value="Spry regulation of FGF signaling"/>
</dbReference>
<dbReference type="BioGRID-ORCS" id="17346">
    <property type="hits" value="3 hits in 82 CRISPR screens"/>
</dbReference>
<dbReference type="ChiTaRS" id="Mknk1">
    <property type="organism name" value="mouse"/>
</dbReference>
<dbReference type="PRO" id="PR:O08605"/>
<dbReference type="Proteomes" id="UP000000589">
    <property type="component" value="Unplaced"/>
</dbReference>
<dbReference type="RNAct" id="O08605">
    <property type="molecule type" value="protein"/>
</dbReference>
<dbReference type="GO" id="GO:0005524">
    <property type="term" value="F:ATP binding"/>
    <property type="evidence" value="ECO:0000314"/>
    <property type="project" value="UniProtKB"/>
</dbReference>
<dbReference type="GO" id="GO:0046872">
    <property type="term" value="F:metal ion binding"/>
    <property type="evidence" value="ECO:0007669"/>
    <property type="project" value="UniProtKB-KW"/>
</dbReference>
<dbReference type="GO" id="GO:0106310">
    <property type="term" value="F:protein serine kinase activity"/>
    <property type="evidence" value="ECO:0007669"/>
    <property type="project" value="RHEA"/>
</dbReference>
<dbReference type="GO" id="GO:0004674">
    <property type="term" value="F:protein serine/threonine kinase activity"/>
    <property type="evidence" value="ECO:0000314"/>
    <property type="project" value="UniProtKB"/>
</dbReference>
<dbReference type="GO" id="GO:0097192">
    <property type="term" value="P:extrinsic apoptotic signaling pathway in absence of ligand"/>
    <property type="evidence" value="ECO:0000315"/>
    <property type="project" value="MGI"/>
</dbReference>
<dbReference type="GO" id="GO:0035556">
    <property type="term" value="P:intracellular signal transduction"/>
    <property type="evidence" value="ECO:0000314"/>
    <property type="project" value="UniProtKB"/>
</dbReference>
<dbReference type="GO" id="GO:0006468">
    <property type="term" value="P:protein phosphorylation"/>
    <property type="evidence" value="ECO:0000314"/>
    <property type="project" value="UniProtKB"/>
</dbReference>
<dbReference type="GO" id="GO:0006417">
    <property type="term" value="P:regulation of translation"/>
    <property type="evidence" value="ECO:0007669"/>
    <property type="project" value="UniProtKB-KW"/>
</dbReference>
<dbReference type="GO" id="GO:0009651">
    <property type="term" value="P:response to salt stress"/>
    <property type="evidence" value="ECO:0000314"/>
    <property type="project" value="UniProtKB"/>
</dbReference>
<dbReference type="CDD" id="cd14174">
    <property type="entry name" value="STKc_Mnk1"/>
    <property type="match status" value="1"/>
</dbReference>
<dbReference type="FunFam" id="1.10.510.10:FF:000119">
    <property type="entry name" value="Putative map kinase-interacting serine/threonine-protein kinase 1"/>
    <property type="match status" value="1"/>
</dbReference>
<dbReference type="FunFam" id="3.30.200.20:FF:000093">
    <property type="entry name" value="Putative map kinase-interacting serine/threonine-protein kinase 1"/>
    <property type="match status" value="1"/>
</dbReference>
<dbReference type="Gene3D" id="3.30.200.20">
    <property type="entry name" value="Phosphorylase Kinase, domain 1"/>
    <property type="match status" value="1"/>
</dbReference>
<dbReference type="Gene3D" id="1.10.510.10">
    <property type="entry name" value="Transferase(Phosphotransferase) domain 1"/>
    <property type="match status" value="1"/>
</dbReference>
<dbReference type="InterPro" id="IPR050205">
    <property type="entry name" value="CDPK_Ser/Thr_kinases"/>
</dbReference>
<dbReference type="InterPro" id="IPR011009">
    <property type="entry name" value="Kinase-like_dom_sf"/>
</dbReference>
<dbReference type="InterPro" id="IPR000719">
    <property type="entry name" value="Prot_kinase_dom"/>
</dbReference>
<dbReference type="InterPro" id="IPR017441">
    <property type="entry name" value="Protein_kinase_ATP_BS"/>
</dbReference>
<dbReference type="InterPro" id="IPR008271">
    <property type="entry name" value="Ser/Thr_kinase_AS"/>
</dbReference>
<dbReference type="PANTHER" id="PTHR24349">
    <property type="entry name" value="SERINE/THREONINE-PROTEIN KINASE"/>
    <property type="match status" value="1"/>
</dbReference>
<dbReference type="Pfam" id="PF00069">
    <property type="entry name" value="Pkinase"/>
    <property type="match status" value="1"/>
</dbReference>
<dbReference type="SMART" id="SM00220">
    <property type="entry name" value="S_TKc"/>
    <property type="match status" value="1"/>
</dbReference>
<dbReference type="SUPFAM" id="SSF56112">
    <property type="entry name" value="Protein kinase-like (PK-like)"/>
    <property type="match status" value="1"/>
</dbReference>
<dbReference type="PROSITE" id="PS00107">
    <property type="entry name" value="PROTEIN_KINASE_ATP"/>
    <property type="match status" value="1"/>
</dbReference>
<dbReference type="PROSITE" id="PS50011">
    <property type="entry name" value="PROTEIN_KINASE_DOM"/>
    <property type="match status" value="1"/>
</dbReference>
<dbReference type="PROSITE" id="PS00108">
    <property type="entry name" value="PROTEIN_KINASE_ST"/>
    <property type="match status" value="1"/>
</dbReference>